<feature type="chain" id="PRO_0000456677" description="Caspase-7">
    <location>
        <begin position="1"/>
        <end position="309"/>
    </location>
</feature>
<feature type="propeptide" id="PRO_0000456678" description="N-terminally processed" evidence="2">
    <location>
        <begin position="1"/>
        <end position="24"/>
    </location>
</feature>
<feature type="chain" id="PRO_0000456679" description="Caspase-7 subunit p20" evidence="2">
    <location>
        <begin position="25"/>
        <end position="203"/>
    </location>
</feature>
<feature type="propeptide" id="PRO_0000456680" evidence="2">
    <location>
        <begin position="204"/>
        <end position="214"/>
    </location>
</feature>
<feature type="chain" id="PRO_0000456681" description="Caspase-7 subunit p11" evidence="2">
    <location>
        <begin position="215"/>
        <end position="309"/>
    </location>
</feature>
<feature type="region of interest" description="Disordered" evidence="4">
    <location>
        <begin position="1"/>
        <end position="53"/>
    </location>
</feature>
<feature type="region of interest" description="Exosite" evidence="2">
    <location>
        <begin position="39"/>
        <end position="42"/>
    </location>
</feature>
<feature type="region of interest" description="Loop L1" evidence="2">
    <location>
        <begin position="81"/>
        <end position="92"/>
    </location>
</feature>
<feature type="region of interest" description="Loop L2" evidence="2">
    <location>
        <begin position="192"/>
        <end position="201"/>
    </location>
</feature>
<feature type="region of interest" description="Loop L3" evidence="2">
    <location>
        <begin position="234"/>
        <end position="246"/>
    </location>
</feature>
<feature type="region of interest" description="Loop L4" evidence="2">
    <location>
        <begin position="282"/>
        <end position="296"/>
    </location>
</feature>
<feature type="compositionally biased region" description="Basic and acidic residues" evidence="4">
    <location>
        <begin position="1"/>
        <end position="31"/>
    </location>
</feature>
<feature type="active site" evidence="2">
    <location>
        <position position="149"/>
    </location>
</feature>
<feature type="active site" evidence="2">
    <location>
        <position position="191"/>
    </location>
</feature>
<feature type="site" description="Involved in allosteric regulation" evidence="2">
    <location>
        <position position="192"/>
    </location>
</feature>
<feature type="site" description="Involved in allosteric regulation" evidence="2">
    <location>
        <position position="231"/>
    </location>
</feature>
<proteinExistence type="inferred from homology"/>
<dbReference type="EC" id="3.4.22.60" evidence="2"/>
<dbReference type="EMBL" id="AADN05000306">
    <property type="status" value="NOT_ANNOTATED_CDS"/>
    <property type="molecule type" value="Genomic_DNA"/>
</dbReference>
<dbReference type="RefSeq" id="XP_025007610.1">
    <property type="nucleotide sequence ID" value="XM_025151842.3"/>
</dbReference>
<dbReference type="RefSeq" id="XP_040530980.1">
    <property type="nucleotide sequence ID" value="XM_040675046.2"/>
</dbReference>
<dbReference type="RefSeq" id="XP_040530981.1">
    <property type="nucleotide sequence ID" value="XM_040675047.2"/>
</dbReference>
<dbReference type="RefSeq" id="XP_046776577.1">
    <property type="nucleotide sequence ID" value="XM_046920621.1"/>
</dbReference>
<dbReference type="RefSeq" id="XP_046799084.1">
    <property type="nucleotide sequence ID" value="XM_046943128.1"/>
</dbReference>
<dbReference type="RefSeq" id="XP_421764.3">
    <property type="nucleotide sequence ID" value="XM_421764.7"/>
</dbReference>
<dbReference type="SMR" id="F1NV61"/>
<dbReference type="FunCoup" id="F1NV61">
    <property type="interactions" value="417"/>
</dbReference>
<dbReference type="STRING" id="9031.ENSGALP00000014503"/>
<dbReference type="PaxDb" id="9031-ENSGALP00000014503"/>
<dbReference type="GeneID" id="423901"/>
<dbReference type="CTD" id="840"/>
<dbReference type="VEuPathDB" id="HostDB:geneid_423901"/>
<dbReference type="eggNOG" id="KOG3573">
    <property type="taxonomic scope" value="Eukaryota"/>
</dbReference>
<dbReference type="HOGENOM" id="CLU_036904_2_0_1"/>
<dbReference type="InParanoid" id="F1NV61"/>
<dbReference type="OrthoDB" id="6116485at2759"/>
<dbReference type="TreeFam" id="TF102023"/>
<dbReference type="Reactome" id="R-GGA-111459">
    <property type="pathway name" value="Activation of caspases through apoptosome-mediated cleavage"/>
</dbReference>
<dbReference type="Reactome" id="R-GGA-111463">
    <property type="pathway name" value="SMAC (DIABLO) binds to IAPs"/>
</dbReference>
<dbReference type="Reactome" id="R-GGA-111464">
    <property type="pathway name" value="SMAC(DIABLO)-mediated dissociation of IAP:caspase complexes"/>
</dbReference>
<dbReference type="Reactome" id="R-GGA-111465">
    <property type="pathway name" value="Apoptotic cleavage of cellular proteins"/>
</dbReference>
<dbReference type="Reactome" id="R-GGA-111469">
    <property type="pathway name" value="SMAC, XIAP-regulated apoptotic response"/>
</dbReference>
<dbReference type="Reactome" id="R-GGA-264870">
    <property type="pathway name" value="Caspase-mediated cleavage of cytoskeletal proteins"/>
</dbReference>
<dbReference type="PRO" id="PR:F1NV61"/>
<dbReference type="Proteomes" id="UP000000539">
    <property type="component" value="Chromosome 6"/>
</dbReference>
<dbReference type="Bgee" id="ENSGALG00000008933">
    <property type="expression patterns" value="Expressed in colon and 11 other cell types or tissues"/>
</dbReference>
<dbReference type="GO" id="GO:0005737">
    <property type="term" value="C:cytoplasm"/>
    <property type="evidence" value="ECO:0000250"/>
    <property type="project" value="UniProtKB"/>
</dbReference>
<dbReference type="GO" id="GO:0005829">
    <property type="term" value="C:cytosol"/>
    <property type="evidence" value="ECO:0000250"/>
    <property type="project" value="UniProtKB"/>
</dbReference>
<dbReference type="GO" id="GO:0005615">
    <property type="term" value="C:extracellular space"/>
    <property type="evidence" value="ECO:0000250"/>
    <property type="project" value="UniProtKB"/>
</dbReference>
<dbReference type="GO" id="GO:0005634">
    <property type="term" value="C:nucleus"/>
    <property type="evidence" value="ECO:0000250"/>
    <property type="project" value="UniProtKB"/>
</dbReference>
<dbReference type="GO" id="GO:0004190">
    <property type="term" value="F:aspartic-type endopeptidase activity"/>
    <property type="evidence" value="ECO:0000250"/>
    <property type="project" value="UniProtKB"/>
</dbReference>
<dbReference type="GO" id="GO:0004197">
    <property type="term" value="F:cysteine-type endopeptidase activity"/>
    <property type="evidence" value="ECO:0000314"/>
    <property type="project" value="UniProtKB"/>
</dbReference>
<dbReference type="GO" id="GO:0003723">
    <property type="term" value="F:RNA binding"/>
    <property type="evidence" value="ECO:0000250"/>
    <property type="project" value="UniProtKB"/>
</dbReference>
<dbReference type="GO" id="GO:0006915">
    <property type="term" value="P:apoptotic process"/>
    <property type="evidence" value="ECO:0000318"/>
    <property type="project" value="GO_Central"/>
</dbReference>
<dbReference type="GO" id="GO:0042742">
    <property type="term" value="P:defense response to bacterium"/>
    <property type="evidence" value="ECO:0000250"/>
    <property type="project" value="UniProtKB"/>
</dbReference>
<dbReference type="GO" id="GO:0097194">
    <property type="term" value="P:execution phase of apoptosis"/>
    <property type="evidence" value="ECO:0000318"/>
    <property type="project" value="GO_Central"/>
</dbReference>
<dbReference type="GO" id="GO:0070227">
    <property type="term" value="P:lymphocyte apoptotic process"/>
    <property type="evidence" value="ECO:0000250"/>
    <property type="project" value="UniProtKB"/>
</dbReference>
<dbReference type="GO" id="GO:0043525">
    <property type="term" value="P:positive regulation of neuron apoptotic process"/>
    <property type="evidence" value="ECO:0000318"/>
    <property type="project" value="GO_Central"/>
</dbReference>
<dbReference type="GO" id="GO:1905686">
    <property type="term" value="P:positive regulation of plasma membrane repair"/>
    <property type="evidence" value="ECO:0000250"/>
    <property type="project" value="UniProtKB"/>
</dbReference>
<dbReference type="GO" id="GO:0006508">
    <property type="term" value="P:proteolysis"/>
    <property type="evidence" value="ECO:0007669"/>
    <property type="project" value="UniProtKB-KW"/>
</dbReference>
<dbReference type="CDD" id="cd00032">
    <property type="entry name" value="CASc"/>
    <property type="match status" value="1"/>
</dbReference>
<dbReference type="FunFam" id="3.40.50.1460:FF:000001">
    <property type="entry name" value="Caspase-3 preproprotein"/>
    <property type="match status" value="1"/>
</dbReference>
<dbReference type="Gene3D" id="3.40.50.1460">
    <property type="match status" value="1"/>
</dbReference>
<dbReference type="InterPro" id="IPR029030">
    <property type="entry name" value="Caspase-like_dom_sf"/>
</dbReference>
<dbReference type="InterPro" id="IPR033139">
    <property type="entry name" value="Caspase_cys_AS"/>
</dbReference>
<dbReference type="InterPro" id="IPR016129">
    <property type="entry name" value="Caspase_his_AS"/>
</dbReference>
<dbReference type="InterPro" id="IPR002398">
    <property type="entry name" value="Pept_C14"/>
</dbReference>
<dbReference type="InterPro" id="IPR011600">
    <property type="entry name" value="Pept_C14_caspase"/>
</dbReference>
<dbReference type="InterPro" id="IPR002138">
    <property type="entry name" value="Pept_C14_p10"/>
</dbReference>
<dbReference type="InterPro" id="IPR001309">
    <property type="entry name" value="Pept_C14_p20"/>
</dbReference>
<dbReference type="InterPro" id="IPR015917">
    <property type="entry name" value="Pept_C14A"/>
</dbReference>
<dbReference type="PANTHER" id="PTHR10454">
    <property type="entry name" value="CASPASE"/>
    <property type="match status" value="1"/>
</dbReference>
<dbReference type="PANTHER" id="PTHR10454:SF31">
    <property type="entry name" value="CASPASE-7"/>
    <property type="match status" value="1"/>
</dbReference>
<dbReference type="Pfam" id="PF00656">
    <property type="entry name" value="Peptidase_C14"/>
    <property type="match status" value="1"/>
</dbReference>
<dbReference type="PIRSF" id="PIRSF038001">
    <property type="entry name" value="Caspase_ICE"/>
    <property type="match status" value="1"/>
</dbReference>
<dbReference type="PRINTS" id="PR00376">
    <property type="entry name" value="IL1BCENZYME"/>
</dbReference>
<dbReference type="SMART" id="SM00115">
    <property type="entry name" value="CASc"/>
    <property type="match status" value="1"/>
</dbReference>
<dbReference type="SUPFAM" id="SSF52129">
    <property type="entry name" value="Caspase-like"/>
    <property type="match status" value="1"/>
</dbReference>
<dbReference type="PROSITE" id="PS01122">
    <property type="entry name" value="CASPASE_CYS"/>
    <property type="match status" value="1"/>
</dbReference>
<dbReference type="PROSITE" id="PS01121">
    <property type="entry name" value="CASPASE_HIS"/>
    <property type="match status" value="1"/>
</dbReference>
<dbReference type="PROSITE" id="PS50207">
    <property type="entry name" value="CASPASE_P10"/>
    <property type="match status" value="1"/>
</dbReference>
<dbReference type="PROSITE" id="PS50208">
    <property type="entry name" value="CASPASE_P20"/>
    <property type="match status" value="1"/>
</dbReference>
<comment type="function">
    <text evidence="3 5">Thiol protease involved in different programmed cell death processes, such as apoptosis, pyroptosis or granzyme-mediated programmed cell death, by proteolytically cleaving target proteins (PubMed:14583630). Has a marked preference for Asp-Glu-Val-Asp (DEVD) consensus sequences, with some plasticity for alternate non-canonical sequences (By similarity). Its involvement in the different programmed cell death processes is probably determined by upstream proteases that activate CASP7 (By similarity). Acts as an effector caspase involved in the execution phase of apoptosis: following cleavage and activation by initiator caspases (CASP8 and/or CASP9), mediates execution of apoptosis by catalyzing cleavage of proteins (PubMed:14583630). Compared to CASP3, acts as a minor executioner caspase and cleaves a limited set of target proteins (By similarity). Acts as a key regulator of the inflammatory response in response to bacterial infection by catalyzing cleavage and activation of the sphingomyelin phosphodiesterase SMPD1 in the extracellular milieu, thereby promoting membrane repair (By similarity). Cleaves BIRC6 following inhibition of BIRC6-caspase binding by DIABLO/SMAC (By similarity).</text>
</comment>
<comment type="catalytic activity">
    <reaction evidence="3">
        <text>Strict requirement for an Asp residue at position P1 and has a preferred cleavage sequence of Asp-Glu-Val-Asp-|-.</text>
        <dbReference type="EC" id="3.4.22.60"/>
    </reaction>
</comment>
<comment type="activity regulation">
    <text evidence="1 2 3">During activation, the N-terminal disordered prodomain is removed by cleavage. Concomitantly, double cleavage gives rise to a large Caspase-7 subunit p20 and a small Caspase-7 subunit p11. The two large and two small subunits then assemble to form the active CASP7 complex. Can be cleaved and activated by different caspases, depending on the context (By similarity). Cleaved and activated by initiator caspases (CASP8 and/or CASP9), leading to execution phase of apoptosis (By similarity). Cleavage and maturation by GZMB regulates granzyme-mediated programmed cell death. Cleavage and maturation by CASP1 regulates pyroptosis (By similarity). Inhibited by BIRC6; following inhibition of BIRC6-caspase binding by DIABLO/SMAC, BIRC6 is subjected to caspase cleavage, leading to an increase in active caspases (By similarity).</text>
</comment>
<comment type="subunit">
    <text evidence="2">Heterotetramer that consists of two anti-parallel arranged heterodimers, each one formed by a 20 kDa (p20) and a 11 kDa (p11) subunit.</text>
</comment>
<comment type="subcellular location">
    <subcellularLocation>
        <location evidence="2">Cytoplasm</location>
        <location evidence="2">Cytosol</location>
    </subcellularLocation>
    <subcellularLocation>
        <location evidence="2">Nucleus</location>
    </subcellularLocation>
    <subcellularLocation>
        <location evidence="3">Secreted</location>
        <location evidence="3">Extracellular space</location>
    </subcellularLocation>
    <text evidence="3">Following cleavage and activation by CASP1 or granzyme B (GZMB), secreted into the extracellular milieu by passing through the gasdermin-D (GSDMD) pores or perforin (PRF1) pore, respectively.</text>
</comment>
<comment type="PTM">
    <text evidence="2 3">Cleavage by different proteases, such as granzyme B (GZMB), caspase-1 (CASP1), caspase-8 (CASP8) or caspase-9 (CASP9) generate the two active subunits. Its involvement in different programmed cell death processes is probably specified by the protease that activates CASP7 (By similarity). Cleaved and activated by initiator caspases (CASP8 and/or CASP9), leading to execution phase of apoptosis (By similarity). Cleavage and maturation by GZMB regulates granzyme-mediated programmed cell death (By similarity). Cleaved and activated by CASP1 in response to bacterial infection (By similarity).</text>
</comment>
<comment type="similarity">
    <text evidence="7">Belongs to the peptidase C14A family.</text>
</comment>
<organism>
    <name type="scientific">Gallus gallus</name>
    <name type="common">Chicken</name>
    <dbReference type="NCBI Taxonomy" id="9031"/>
    <lineage>
        <taxon>Eukaryota</taxon>
        <taxon>Metazoa</taxon>
        <taxon>Chordata</taxon>
        <taxon>Craniata</taxon>
        <taxon>Vertebrata</taxon>
        <taxon>Euteleostomi</taxon>
        <taxon>Archelosauria</taxon>
        <taxon>Archosauria</taxon>
        <taxon>Dinosauria</taxon>
        <taxon>Saurischia</taxon>
        <taxon>Theropoda</taxon>
        <taxon>Coelurosauria</taxon>
        <taxon>Aves</taxon>
        <taxon>Neognathae</taxon>
        <taxon>Galloanserae</taxon>
        <taxon>Galliformes</taxon>
        <taxon>Phasianidae</taxon>
        <taxon>Phasianinae</taxon>
        <taxon>Gallus</taxon>
    </lineage>
</organism>
<accession>F1NV61</accession>
<name>CASP7_CHICK</name>
<evidence type="ECO:0000250" key="1">
    <source>
        <dbReference type="UniProtKB" id="P42574"/>
    </source>
</evidence>
<evidence type="ECO:0000250" key="2">
    <source>
        <dbReference type="UniProtKB" id="P55210"/>
    </source>
</evidence>
<evidence type="ECO:0000250" key="3">
    <source>
        <dbReference type="UniProtKB" id="P97864"/>
    </source>
</evidence>
<evidence type="ECO:0000256" key="4">
    <source>
        <dbReference type="SAM" id="MobiDB-lite"/>
    </source>
</evidence>
<evidence type="ECO:0000269" key="5">
    <source>
    </source>
</evidence>
<evidence type="ECO:0000303" key="6">
    <source>
    </source>
</evidence>
<evidence type="ECO:0000305" key="7"/>
<protein>
    <recommendedName>
        <fullName evidence="6">Caspase-7</fullName>
        <shortName>CASP-7</shortName>
        <ecNumber evidence="2">3.4.22.60</ecNumber>
    </recommendedName>
    <component>
        <recommendedName>
            <fullName>Caspase-7 subunit p20</fullName>
        </recommendedName>
    </component>
    <component>
        <recommendedName>
            <fullName>Caspase-7 subunit p11</fullName>
        </recommendedName>
    </component>
</protein>
<gene>
    <name evidence="6" type="primary">CASP7</name>
</gene>
<sequence length="309" mass="34722">MSGDQHADRSSGEKSNGDQDDTVDAKPDRSSRLSLFAKKKKNGEEEQPKSSLSNQYRIVTPTFQYNMNYKKVGKCIIINNKNFEDKTGMGTRNGTDKDAGDLSKSFRSLGFDVYTYNDRSCEDMQTLLKQAAEENHSDAACFACILLSHGEEGLIYGTDGPMAIKHLTTLFRGDKCKTLIGKPKLFFIQACRGSEFDEGIQTDSGPANDTLETDANPRYKIPVEADFLFAYSTVPGYYSWRNPGRGSWFVQSLCSVLNEHGKQLEIMQILTRVNYVVATNFESQSDDPRFSEKKQIPCVVSMLTKELYF</sequence>
<keyword id="KW-0021">Allosteric enzyme</keyword>
<keyword id="KW-0053">Apoptosis</keyword>
<keyword id="KW-0963">Cytoplasm</keyword>
<keyword id="KW-0378">Hydrolase</keyword>
<keyword id="KW-0539">Nucleus</keyword>
<keyword id="KW-0645">Protease</keyword>
<keyword id="KW-1185">Reference proteome</keyword>
<keyword id="KW-0694">RNA-binding</keyword>
<keyword id="KW-0964">Secreted</keyword>
<keyword id="KW-0788">Thiol protease</keyword>
<keyword id="KW-0865">Zymogen</keyword>
<reference key="1">
    <citation type="journal article" date="2004" name="Nature">
        <title>Sequence and comparative analysis of the chicken genome provide unique perspectives on vertebrate evolution.</title>
        <authorList>
            <person name="Hillier L.W."/>
            <person name="Miller W."/>
            <person name="Birney E."/>
            <person name="Warren W."/>
            <person name="Hardison R.C."/>
            <person name="Ponting C.P."/>
            <person name="Bork P."/>
            <person name="Burt D.W."/>
            <person name="Groenen M.A.M."/>
            <person name="Delany M.E."/>
            <person name="Dodgson J.B."/>
            <person name="Chinwalla A.T."/>
            <person name="Cliften P.F."/>
            <person name="Clifton S.W."/>
            <person name="Delehaunty K.D."/>
            <person name="Fronick C."/>
            <person name="Fulton R.S."/>
            <person name="Graves T.A."/>
            <person name="Kremitzki C."/>
            <person name="Layman D."/>
            <person name="Magrini V."/>
            <person name="McPherson J.D."/>
            <person name="Miner T.L."/>
            <person name="Minx P."/>
            <person name="Nash W.E."/>
            <person name="Nhan M.N."/>
            <person name="Nelson J.O."/>
            <person name="Oddy L.G."/>
            <person name="Pohl C.S."/>
            <person name="Randall-Maher J."/>
            <person name="Smith S.M."/>
            <person name="Wallis J.W."/>
            <person name="Yang S.-P."/>
            <person name="Romanov M.N."/>
            <person name="Rondelli C.M."/>
            <person name="Paton B."/>
            <person name="Smith J."/>
            <person name="Morrice D."/>
            <person name="Daniels L."/>
            <person name="Tempest H.G."/>
            <person name="Robertson L."/>
            <person name="Masabanda J.S."/>
            <person name="Griffin D.K."/>
            <person name="Vignal A."/>
            <person name="Fillon V."/>
            <person name="Jacobbson L."/>
            <person name="Kerje S."/>
            <person name="Andersson L."/>
            <person name="Crooijmans R.P."/>
            <person name="Aerts J."/>
            <person name="van der Poel J.J."/>
            <person name="Ellegren H."/>
            <person name="Caldwell R.B."/>
            <person name="Hubbard S.J."/>
            <person name="Grafham D.V."/>
            <person name="Kierzek A.M."/>
            <person name="McLaren S.R."/>
            <person name="Overton I.M."/>
            <person name="Arakawa H."/>
            <person name="Beattie K.J."/>
            <person name="Bezzubov Y."/>
            <person name="Boardman P.E."/>
            <person name="Bonfield J.K."/>
            <person name="Croning M.D.R."/>
            <person name="Davies R.M."/>
            <person name="Francis M.D."/>
            <person name="Humphray S.J."/>
            <person name="Scott C.E."/>
            <person name="Taylor R.G."/>
            <person name="Tickle C."/>
            <person name="Brown W.R.A."/>
            <person name="Rogers J."/>
            <person name="Buerstedde J.-M."/>
            <person name="Wilson S.A."/>
            <person name="Stubbs L."/>
            <person name="Ovcharenko I."/>
            <person name="Gordon L."/>
            <person name="Lucas S."/>
            <person name="Miller M.M."/>
            <person name="Inoko H."/>
            <person name="Shiina T."/>
            <person name="Kaufman J."/>
            <person name="Salomonsen J."/>
            <person name="Skjoedt K."/>
            <person name="Wong G.K.-S."/>
            <person name="Wang J."/>
            <person name="Liu B."/>
            <person name="Wang J."/>
            <person name="Yu J."/>
            <person name="Yang H."/>
            <person name="Nefedov M."/>
            <person name="Koriabine M."/>
            <person name="Dejong P.J."/>
            <person name="Goodstadt L."/>
            <person name="Webber C."/>
            <person name="Dickens N.J."/>
            <person name="Letunic I."/>
            <person name="Suyama M."/>
            <person name="Torrents D."/>
            <person name="von Mering C."/>
            <person name="Zdobnov E.M."/>
            <person name="Makova K."/>
            <person name="Nekrutenko A."/>
            <person name="Elnitski L."/>
            <person name="Eswara P."/>
            <person name="King D.C."/>
            <person name="Yang S.-P."/>
            <person name="Tyekucheva S."/>
            <person name="Radakrishnan A."/>
            <person name="Harris R.S."/>
            <person name="Chiaromonte F."/>
            <person name="Taylor J."/>
            <person name="He J."/>
            <person name="Rijnkels M."/>
            <person name="Griffiths-Jones S."/>
            <person name="Ureta-Vidal A."/>
            <person name="Hoffman M.M."/>
            <person name="Severin J."/>
            <person name="Searle S.M.J."/>
            <person name="Law A.S."/>
            <person name="Speed D."/>
            <person name="Waddington D."/>
            <person name="Cheng Z."/>
            <person name="Tuzun E."/>
            <person name="Eichler E."/>
            <person name="Bao Z."/>
            <person name="Flicek P."/>
            <person name="Shteynberg D.D."/>
            <person name="Brent M.R."/>
            <person name="Bye J.M."/>
            <person name="Huckle E.J."/>
            <person name="Chatterji S."/>
            <person name="Dewey C."/>
            <person name="Pachter L."/>
            <person name="Kouranov A."/>
            <person name="Mourelatos Z."/>
            <person name="Hatzigeorgiou A.G."/>
            <person name="Paterson A.H."/>
            <person name="Ivarie R."/>
            <person name="Brandstrom M."/>
            <person name="Axelsson E."/>
            <person name="Backstrom N."/>
            <person name="Berlin S."/>
            <person name="Webster M.T."/>
            <person name="Pourquie O."/>
            <person name="Reymond A."/>
            <person name="Ucla C."/>
            <person name="Antonarakis S.E."/>
            <person name="Long M."/>
            <person name="Emerson J.J."/>
            <person name="Betran E."/>
            <person name="Dupanloup I."/>
            <person name="Kaessmann H."/>
            <person name="Hinrichs A.S."/>
            <person name="Bejerano G."/>
            <person name="Furey T.S."/>
            <person name="Harte R.A."/>
            <person name="Raney B."/>
            <person name="Siepel A."/>
            <person name="Kent W.J."/>
            <person name="Haussler D."/>
            <person name="Eyras E."/>
            <person name="Castelo R."/>
            <person name="Abril J.F."/>
            <person name="Castellano S."/>
            <person name="Camara F."/>
            <person name="Parra G."/>
            <person name="Guigo R."/>
            <person name="Bourque G."/>
            <person name="Tesler G."/>
            <person name="Pevzner P.A."/>
            <person name="Smit A."/>
            <person name="Fulton L.A."/>
            <person name="Mardis E.R."/>
            <person name="Wilson R.K."/>
        </authorList>
    </citation>
    <scope>NUCLEOTIDE SEQUENCE [LARGE SCALE GENOMIC DNA]</scope>
    <source>
        <strain>Red jungle fowl</strain>
    </source>
</reference>
<reference key="2">
    <citation type="journal article" date="2004" name="J. Biol. Chem.">
        <title>Caspase-7 gene disruption reveals an involvement of the enzyme during the early stages of apoptosis.</title>
        <authorList>
            <person name="Korfali N."/>
            <person name="Ruchaud S."/>
            <person name="Loegering D."/>
            <person name="Bernard D."/>
            <person name="Dingwall C."/>
            <person name="Kaufmann S.H."/>
            <person name="Earnshaw W.C."/>
        </authorList>
    </citation>
    <scope>FUNCTION</scope>
</reference>